<accession>B7KZG0</accession>
<evidence type="ECO:0000255" key="1">
    <source>
        <dbReference type="HAMAP-Rule" id="MF_00291"/>
    </source>
</evidence>
<evidence type="ECO:0000305" key="2"/>
<protein>
    <recommendedName>
        <fullName evidence="1">Small ribosomal subunit protein uS2</fullName>
    </recommendedName>
    <alternativeName>
        <fullName evidence="2">30S ribosomal protein S2</fullName>
    </alternativeName>
</protein>
<feature type="chain" id="PRO_1000194338" description="Small ribosomal subunit protein uS2">
    <location>
        <begin position="1"/>
        <end position="355"/>
    </location>
</feature>
<sequence length="355" mass="38105">MAVDFSMRQLLEAGAHFGHQSHRWNPKMQPYIFGTRNNIHIIDLAQTVPALHAALQAVSDTVARGGRVLFVGTKRQAADSIAEAAKRSAQYYVNSRWLGGMLTNWKTISGSIQRLRKVDETLEGGAVGLTKKERLMLTREKDKLEKALGGIKDMGGVPDLLFVIDTNKEQLAIKEAQRLGIPVAAIVDTNCNPDGISYIVPANDDAGRAIALYCDLIARAAIEGIGRGQGALGLDVGASEEPTAEELPPANDDVAVSVASDAIAPADVAALAESTEHFEQLAAPRGAPDDLTKLNGVGPQLVQKLNDAGVWHYWQIAAMQPEDVAKLDADLKLNGRFARDGWVEQSRAFVEASAA</sequence>
<proteinExistence type="inferred from homology"/>
<gene>
    <name evidence="1" type="primary">rpsB</name>
    <name type="ordered locus">Mchl_2347</name>
</gene>
<comment type="similarity">
    <text evidence="1">Belongs to the universal ribosomal protein uS2 family.</text>
</comment>
<keyword id="KW-0687">Ribonucleoprotein</keyword>
<keyword id="KW-0689">Ribosomal protein</keyword>
<dbReference type="EMBL" id="CP001298">
    <property type="protein sequence ID" value="ACK83192.1"/>
    <property type="molecule type" value="Genomic_DNA"/>
</dbReference>
<dbReference type="RefSeq" id="WP_003598033.1">
    <property type="nucleotide sequence ID" value="NC_011757.1"/>
</dbReference>
<dbReference type="SMR" id="B7KZG0"/>
<dbReference type="GeneID" id="72989760"/>
<dbReference type="KEGG" id="mch:Mchl_2347"/>
<dbReference type="HOGENOM" id="CLU_040318_2_1_5"/>
<dbReference type="Proteomes" id="UP000002385">
    <property type="component" value="Chromosome"/>
</dbReference>
<dbReference type="GO" id="GO:0022627">
    <property type="term" value="C:cytosolic small ribosomal subunit"/>
    <property type="evidence" value="ECO:0007669"/>
    <property type="project" value="TreeGrafter"/>
</dbReference>
<dbReference type="GO" id="GO:0003735">
    <property type="term" value="F:structural constituent of ribosome"/>
    <property type="evidence" value="ECO:0007669"/>
    <property type="project" value="InterPro"/>
</dbReference>
<dbReference type="GO" id="GO:0006412">
    <property type="term" value="P:translation"/>
    <property type="evidence" value="ECO:0007669"/>
    <property type="project" value="UniProtKB-UniRule"/>
</dbReference>
<dbReference type="CDD" id="cd01425">
    <property type="entry name" value="RPS2"/>
    <property type="match status" value="1"/>
</dbReference>
<dbReference type="FunFam" id="1.10.287.610:FF:000001">
    <property type="entry name" value="30S ribosomal protein S2"/>
    <property type="match status" value="1"/>
</dbReference>
<dbReference type="Gene3D" id="1.10.150.20">
    <property type="entry name" value="5' to 3' exonuclease, C-terminal subdomain"/>
    <property type="match status" value="1"/>
</dbReference>
<dbReference type="Gene3D" id="3.40.50.10490">
    <property type="entry name" value="Glucose-6-phosphate isomerase like protein, domain 1"/>
    <property type="match status" value="1"/>
</dbReference>
<dbReference type="Gene3D" id="1.10.287.610">
    <property type="entry name" value="Helix hairpin bin"/>
    <property type="match status" value="1"/>
</dbReference>
<dbReference type="HAMAP" id="MF_00291_B">
    <property type="entry name" value="Ribosomal_uS2_B"/>
    <property type="match status" value="1"/>
</dbReference>
<dbReference type="InterPro" id="IPR001865">
    <property type="entry name" value="Ribosomal_uS2"/>
</dbReference>
<dbReference type="InterPro" id="IPR005706">
    <property type="entry name" value="Ribosomal_uS2_bac/mit/plastid"/>
</dbReference>
<dbReference type="InterPro" id="IPR018130">
    <property type="entry name" value="Ribosomal_uS2_CS"/>
</dbReference>
<dbReference type="InterPro" id="IPR023591">
    <property type="entry name" value="Ribosomal_uS2_flav_dom_sf"/>
</dbReference>
<dbReference type="NCBIfam" id="NF008966">
    <property type="entry name" value="PRK12311.1"/>
    <property type="match status" value="1"/>
</dbReference>
<dbReference type="NCBIfam" id="TIGR01011">
    <property type="entry name" value="rpsB_bact"/>
    <property type="match status" value="1"/>
</dbReference>
<dbReference type="PANTHER" id="PTHR12534">
    <property type="entry name" value="30S RIBOSOMAL PROTEIN S2 PROKARYOTIC AND ORGANELLAR"/>
    <property type="match status" value="1"/>
</dbReference>
<dbReference type="PANTHER" id="PTHR12534:SF0">
    <property type="entry name" value="SMALL RIBOSOMAL SUBUNIT PROTEIN US2M"/>
    <property type="match status" value="1"/>
</dbReference>
<dbReference type="Pfam" id="PF00318">
    <property type="entry name" value="Ribosomal_S2"/>
    <property type="match status" value="1"/>
</dbReference>
<dbReference type="PRINTS" id="PR00395">
    <property type="entry name" value="RIBOSOMALS2"/>
</dbReference>
<dbReference type="SUPFAM" id="SSF52313">
    <property type="entry name" value="Ribosomal protein S2"/>
    <property type="match status" value="1"/>
</dbReference>
<dbReference type="PROSITE" id="PS00962">
    <property type="entry name" value="RIBOSOMAL_S2_1"/>
    <property type="match status" value="1"/>
</dbReference>
<dbReference type="PROSITE" id="PS00963">
    <property type="entry name" value="RIBOSOMAL_S2_2"/>
    <property type="match status" value="1"/>
</dbReference>
<name>RS2_METC4</name>
<organism>
    <name type="scientific">Methylorubrum extorquens (strain CM4 / NCIMB 13688)</name>
    <name type="common">Methylobacterium extorquens</name>
    <dbReference type="NCBI Taxonomy" id="440085"/>
    <lineage>
        <taxon>Bacteria</taxon>
        <taxon>Pseudomonadati</taxon>
        <taxon>Pseudomonadota</taxon>
        <taxon>Alphaproteobacteria</taxon>
        <taxon>Hyphomicrobiales</taxon>
        <taxon>Methylobacteriaceae</taxon>
        <taxon>Methylorubrum</taxon>
    </lineage>
</organism>
<reference key="1">
    <citation type="submission" date="2008-12" db="EMBL/GenBank/DDBJ databases">
        <title>Complete sequence of chromosome of Methylobacterium chloromethanicum CM4.</title>
        <authorList>
            <consortium name="US DOE Joint Genome Institute"/>
            <person name="Lucas S."/>
            <person name="Copeland A."/>
            <person name="Lapidus A."/>
            <person name="Glavina del Rio T."/>
            <person name="Dalin E."/>
            <person name="Tice H."/>
            <person name="Bruce D."/>
            <person name="Goodwin L."/>
            <person name="Pitluck S."/>
            <person name="Chertkov O."/>
            <person name="Brettin T."/>
            <person name="Detter J.C."/>
            <person name="Han C."/>
            <person name="Larimer F."/>
            <person name="Land M."/>
            <person name="Hauser L."/>
            <person name="Kyrpides N."/>
            <person name="Mikhailova N."/>
            <person name="Marx C."/>
            <person name="Richardson P."/>
        </authorList>
    </citation>
    <scope>NUCLEOTIDE SEQUENCE [LARGE SCALE GENOMIC DNA]</scope>
    <source>
        <strain>CM4 / NCIMB 13688</strain>
    </source>
</reference>